<keyword id="KW-0131">Cell cycle</keyword>
<keyword id="KW-0132">Cell division</keyword>
<keyword id="KW-0963">Cytoplasm</keyword>
<keyword id="KW-0206">Cytoskeleton</keyword>
<keyword id="KW-0493">Microtubule</keyword>
<keyword id="KW-0498">Mitosis</keyword>
<keyword id="KW-1185">Reference proteome</keyword>
<proteinExistence type="evidence at protein level"/>
<feature type="chain" id="PRO_0000418411" description="Microtubule-associated protein RP/EB family member 1B">
    <location>
        <begin position="1"/>
        <end position="293"/>
    </location>
</feature>
<feature type="domain" description="Calponin-homology (CH)" evidence="1">
    <location>
        <begin position="13"/>
        <end position="115"/>
    </location>
</feature>
<feature type="domain" description="EB1 C-terminal" evidence="2">
    <location>
        <begin position="180"/>
        <end position="250"/>
    </location>
</feature>
<feature type="region of interest" description="Disordered" evidence="3">
    <location>
        <begin position="124"/>
        <end position="188"/>
    </location>
</feature>
<feature type="region of interest" description="Disordered" evidence="3">
    <location>
        <begin position="262"/>
        <end position="293"/>
    </location>
</feature>
<feature type="compositionally biased region" description="Basic and acidic residues" evidence="3">
    <location>
        <begin position="129"/>
        <end position="141"/>
    </location>
</feature>
<feature type="compositionally biased region" description="Polar residues" evidence="3">
    <location>
        <begin position="151"/>
        <end position="166"/>
    </location>
</feature>
<feature type="compositionally biased region" description="Acidic residues" evidence="3">
    <location>
        <begin position="266"/>
        <end position="285"/>
    </location>
</feature>
<feature type="mutagenesis site" description="Loss of homodimerization; when associated with A-219." evidence="6">
    <original>Y</original>
    <variation>A</variation>
    <location>
        <position position="212"/>
    </location>
</feature>
<feature type="mutagenesis site" description="Loss of homodimerization; when associated with A-211." evidence="6">
    <original>I</original>
    <variation>A</variation>
    <location>
        <position position="219"/>
    </location>
</feature>
<accession>Q9FJJ5</accession>
<accession>Q8GYG7</accession>
<evidence type="ECO:0000255" key="1">
    <source>
        <dbReference type="PROSITE-ProRule" id="PRU00044"/>
    </source>
</evidence>
<evidence type="ECO:0000255" key="2">
    <source>
        <dbReference type="PROSITE-ProRule" id="PRU00576"/>
    </source>
</evidence>
<evidence type="ECO:0000256" key="3">
    <source>
        <dbReference type="SAM" id="MobiDB-lite"/>
    </source>
</evidence>
<evidence type="ECO:0000269" key="4">
    <source>
    </source>
</evidence>
<evidence type="ECO:0000269" key="5">
    <source>
    </source>
</evidence>
<evidence type="ECO:0000269" key="6">
    <source>
    </source>
</evidence>
<evidence type="ECO:0000305" key="7"/>
<evidence type="ECO:0000305" key="8">
    <source>
    </source>
</evidence>
<sequence>MATNIGMMDSAYFVGRNEILSWINDRLHLNLSRIEEAASGAVQCQMLDMTFPGVVPMHKVNFEAKNEYEMIQNYKVMQEVFTKLKITKPLEVNRLVKGRPLDNLEFLQWLKRFCDSINGGIMNENYNPVERRSRGGREKSVKGSSKISKSLQTNNMHHPPVATSNKPAGPKQAKSHGIGGGSNSSAEVQALSKEVEDLKVSVDLLEKERDFYFSKLRDIEILCQTPELDDLPIVVAVKKILYATDANESVLEEAQECLNQSLGLEGYEEEGKEEEEEEEEEEEEAAAAAETQT</sequence>
<gene>
    <name type="primary">EB1B</name>
    <name type="ordered locus">At5g62500</name>
    <name type="ORF">K19B1.11</name>
</gene>
<protein>
    <recommendedName>
        <fullName>Microtubule-associated protein RP/EB family member 1B</fullName>
    </recommendedName>
    <alternativeName>
        <fullName>APC-binding protein EB1B</fullName>
    </alternativeName>
    <alternativeName>
        <fullName>End-binding protein 1</fullName>
        <shortName>AtEB1</shortName>
    </alternativeName>
    <alternativeName>
        <fullName>End-binding protein 1B</fullName>
        <shortName>AtEB1B</shortName>
    </alternativeName>
    <alternativeName>
        <fullName>Protein ATEB1 homolog 2</fullName>
        <shortName>ATEB1H2</shortName>
    </alternativeName>
</protein>
<reference key="1">
    <citation type="journal article" date="1998" name="DNA Res.">
        <title>Structural analysis of Arabidopsis thaliana chromosome 5. VII. Sequence features of the regions of 1,013,767 bp covered by sixteen physically assigned P1 and TAC clones.</title>
        <authorList>
            <person name="Nakamura Y."/>
            <person name="Sato S."/>
            <person name="Asamizu E."/>
            <person name="Kaneko T."/>
            <person name="Kotani H."/>
            <person name="Miyajima N."/>
            <person name="Tabata S."/>
        </authorList>
    </citation>
    <scope>NUCLEOTIDE SEQUENCE [LARGE SCALE GENOMIC DNA]</scope>
    <source>
        <strain>cv. Columbia</strain>
    </source>
</reference>
<reference key="2">
    <citation type="journal article" date="2017" name="Plant J.">
        <title>Araport11: a complete reannotation of the Arabidopsis thaliana reference genome.</title>
        <authorList>
            <person name="Cheng C.Y."/>
            <person name="Krishnakumar V."/>
            <person name="Chan A.P."/>
            <person name="Thibaud-Nissen F."/>
            <person name="Schobel S."/>
            <person name="Town C.D."/>
        </authorList>
    </citation>
    <scope>GENOME REANNOTATION</scope>
    <source>
        <strain>cv. Columbia</strain>
    </source>
</reference>
<reference key="3">
    <citation type="journal article" date="2002" name="Science">
        <title>Functional annotation of a full-length Arabidopsis cDNA collection.</title>
        <authorList>
            <person name="Seki M."/>
            <person name="Narusaka M."/>
            <person name="Kamiya A."/>
            <person name="Ishida J."/>
            <person name="Satou M."/>
            <person name="Sakurai T."/>
            <person name="Nakajima M."/>
            <person name="Enju A."/>
            <person name="Akiyama K."/>
            <person name="Oono Y."/>
            <person name="Muramatsu M."/>
            <person name="Hayashizaki Y."/>
            <person name="Kawai J."/>
            <person name="Carninci P."/>
            <person name="Itoh M."/>
            <person name="Ishii Y."/>
            <person name="Arakawa T."/>
            <person name="Shibata K."/>
            <person name="Shinagawa A."/>
            <person name="Shinozaki K."/>
        </authorList>
    </citation>
    <scope>NUCLEOTIDE SEQUENCE [LARGE SCALE MRNA]</scope>
    <source>
        <strain>cv. Columbia</strain>
    </source>
</reference>
<reference key="4">
    <citation type="submission" date="2002-03" db="EMBL/GenBank/DDBJ databases">
        <title>Full-length cDNA from Arabidopsis thaliana.</title>
        <authorList>
            <person name="Brover V.V."/>
            <person name="Troukhan M.E."/>
            <person name="Alexandrov N.A."/>
            <person name="Lu Y.-P."/>
            <person name="Flavell R.B."/>
            <person name="Feldmann K.A."/>
        </authorList>
    </citation>
    <scope>NUCLEOTIDE SEQUENCE [LARGE SCALE MRNA]</scope>
</reference>
<reference key="5">
    <citation type="journal article" date="2003" name="Curr. Biol.">
        <title>A novel localization pattern for an EB1-like protein links microtubule dynamics to endomembrane organization.</title>
        <authorList>
            <person name="Mathur J."/>
            <person name="Mathur N."/>
            <person name="Kernebeck B."/>
            <person name="Srinivas B.P."/>
            <person name="Huelskamp M."/>
        </authorList>
    </citation>
    <scope>FUNCTION</scope>
    <scope>SUBCELLULAR LOCATION</scope>
</reference>
<reference key="6">
    <citation type="journal article" date="2007" name="J. Cell Sci.">
        <title>CLASP localizes in two discrete patterns on cortical microtubules and is required for cell morphogenesis and cell division in Arabidopsis.</title>
        <authorList>
            <person name="Kirik V."/>
            <person name="Herrmann U."/>
            <person name="Parupalli C."/>
            <person name="Sedbrook J.C."/>
            <person name="Ehrhardt D.W."/>
            <person name="Huelskamp M."/>
        </authorList>
    </citation>
    <scope>SUBCELLULAR LOCATION</scope>
</reference>
<reference key="7">
    <citation type="journal article" date="2008" name="Plant Cell">
        <title>The microtubule plus-end binding protein EB1 functions in root responses to touch and gravity signals in Arabidopsis.</title>
        <authorList>
            <person name="Bisgrove S.R."/>
            <person name="Lee Y.R."/>
            <person name="Liu B."/>
            <person name="Peters N.T."/>
            <person name="Kropf D.L."/>
        </authorList>
    </citation>
    <scope>SUBCELLULAR LOCATION</scope>
    <scope>DISRUPTION PHENOTYPE</scope>
    <source>
        <strain>cv. Wassilewskija</strain>
    </source>
</reference>
<reference key="8">
    <citation type="journal article" date="2010" name="J. Cell Sci.">
        <title>Nuclear-localized subtype of end-binding 1 protein regulates spindle organization in Arabidopsis.</title>
        <authorList>
            <person name="Komaki S."/>
            <person name="Abe T."/>
            <person name="Coutuer S."/>
            <person name="Inze D."/>
            <person name="Russinova E."/>
            <person name="Hashimoto T."/>
        </authorList>
    </citation>
    <scope>FUNCTION</scope>
    <scope>SUBUNIT</scope>
    <scope>SUBCELLULAR LOCATION</scope>
    <scope>TISSUE SPECIFICITY</scope>
    <scope>MUTAGENESIS OF TYR-212 AND ILE-219</scope>
    <scope>DISRUPTION PHENOTYPE</scope>
</reference>
<name>EB1B_ARATH</name>
<comment type="function">
    <text evidence="4 6">Binds to the plus end of microtubules and regulates the dynamics of the microtubule cytoskeleton. May be involved in anchoring microtubules to their nucleation sites and/or functioning as a reservoir for distribution to the growing end. In plants, microtubule minus ends are not necessarily severed from the nucleation site and transported to the plus end of a microtubule as part of the recycling process. May play a role in endomembrane organization during polarized growth of plant cells.</text>
</comment>
<comment type="subunit">
    <text evidence="6">Homodimer and heterodimer with EB1A.</text>
</comment>
<comment type="subcellular location">
    <subcellularLocation>
        <location>Cytoplasm</location>
        <location>Cytoskeleton</location>
        <location>Spindle pole</location>
    </subcellularLocation>
    <subcellularLocation>
        <location>Cytoplasm</location>
        <location>Cytoskeleton</location>
        <location>Phragmoplast</location>
    </subcellularLocation>
    <text>Localizes both to the plus ends of microtubules and to the sites of nucleation during division and interphase.</text>
</comment>
<comment type="tissue specificity">
    <text evidence="6">Highly expressed in guard cells of leaf stomata, pollen grains and pollen tubes. Expressed in young roots.</text>
</comment>
<comment type="domain">
    <text>Composed of two functionally independent domains. The N-terminal domain forms a hydrophobic cleft involved in microtubule binding and the C-terminal is involved in protein binding. In Arabidopsis thaliana, EB1A and EB1B possess an acidic C-terminal tail that has autoinhibitory function, but EB1C has a tail region with patches of basic amino acid residues required for nuclear targeting.</text>
</comment>
<comment type="disruption phenotype">
    <text evidence="5 6">No visible phenotype under normal growth conditions, but root growth is affected in response to gravity or touch stimuli. conditions.</text>
</comment>
<comment type="miscellaneous">
    <text evidence="8">Plant microtubules behave differently from those of other eukaryotes in mitosis: they lack centrosomes and spindles are barrel-shaped with unfocused poles and no astral microtubules.</text>
</comment>
<comment type="similarity">
    <text evidence="7">Belongs to the MAPRE family.</text>
</comment>
<comment type="sequence caution" evidence="7">
    <conflict type="frameshift">
        <sequence resource="EMBL-CDS" id="BAC42296"/>
    </conflict>
</comment>
<dbReference type="EMBL" id="AB015469">
    <property type="protein sequence ID" value="BAB11500.1"/>
    <property type="molecule type" value="Genomic_DNA"/>
</dbReference>
<dbReference type="EMBL" id="CP002688">
    <property type="protein sequence ID" value="AED97615.1"/>
    <property type="molecule type" value="Genomic_DNA"/>
</dbReference>
<dbReference type="EMBL" id="AK117640">
    <property type="protein sequence ID" value="BAC42296.1"/>
    <property type="status" value="ALT_FRAME"/>
    <property type="molecule type" value="mRNA"/>
</dbReference>
<dbReference type="EMBL" id="AY084598">
    <property type="protein sequence ID" value="AAM61163.1"/>
    <property type="molecule type" value="mRNA"/>
</dbReference>
<dbReference type="RefSeq" id="NP_201056.1">
    <property type="nucleotide sequence ID" value="NM_125644.3"/>
</dbReference>
<dbReference type="SMR" id="Q9FJJ5"/>
<dbReference type="BioGRID" id="21614">
    <property type="interactions" value="4"/>
</dbReference>
<dbReference type="FunCoup" id="Q9FJJ5">
    <property type="interactions" value="2547"/>
</dbReference>
<dbReference type="STRING" id="3702.Q9FJJ5"/>
<dbReference type="PaxDb" id="3702-AT5G62500.1"/>
<dbReference type="ProteomicsDB" id="222013"/>
<dbReference type="EnsemblPlants" id="AT5G62500.1">
    <property type="protein sequence ID" value="AT5G62500.1"/>
    <property type="gene ID" value="AT5G62500"/>
</dbReference>
<dbReference type="GeneID" id="836370"/>
<dbReference type="Gramene" id="AT5G62500.1">
    <property type="protein sequence ID" value="AT5G62500.1"/>
    <property type="gene ID" value="AT5G62500"/>
</dbReference>
<dbReference type="KEGG" id="ath:AT5G62500"/>
<dbReference type="Araport" id="AT5G62500"/>
<dbReference type="TAIR" id="AT5G62500">
    <property type="gene designation" value="EB1B"/>
</dbReference>
<dbReference type="eggNOG" id="KOG3000">
    <property type="taxonomic scope" value="Eukaryota"/>
</dbReference>
<dbReference type="HOGENOM" id="CLU_041744_0_1_1"/>
<dbReference type="InParanoid" id="Q9FJJ5"/>
<dbReference type="OMA" id="TMGRAVN"/>
<dbReference type="PhylomeDB" id="Q9FJJ5"/>
<dbReference type="CD-CODE" id="33FCD62D">
    <property type="entry name" value="Centrosome"/>
</dbReference>
<dbReference type="PRO" id="PR:Q9FJJ5"/>
<dbReference type="Proteomes" id="UP000006548">
    <property type="component" value="Chromosome 5"/>
</dbReference>
<dbReference type="ExpressionAtlas" id="Q9FJJ5">
    <property type="expression patterns" value="baseline and differential"/>
</dbReference>
<dbReference type="GO" id="GO:0010005">
    <property type="term" value="C:cortical microtubule, transverse to long axis"/>
    <property type="evidence" value="ECO:0000314"/>
    <property type="project" value="TAIR"/>
</dbReference>
<dbReference type="GO" id="GO:0005874">
    <property type="term" value="C:microtubule"/>
    <property type="evidence" value="ECO:0007005"/>
    <property type="project" value="TAIR"/>
</dbReference>
<dbReference type="GO" id="GO:0005815">
    <property type="term" value="C:microtubule organizing center"/>
    <property type="evidence" value="ECO:0000314"/>
    <property type="project" value="TAIR"/>
</dbReference>
<dbReference type="GO" id="GO:0005634">
    <property type="term" value="C:nucleus"/>
    <property type="evidence" value="ECO:0007005"/>
    <property type="project" value="TAIR"/>
</dbReference>
<dbReference type="GO" id="GO:0009524">
    <property type="term" value="C:phragmoplast"/>
    <property type="evidence" value="ECO:0007005"/>
    <property type="project" value="TAIR"/>
</dbReference>
<dbReference type="GO" id="GO:0005819">
    <property type="term" value="C:spindle"/>
    <property type="evidence" value="ECO:0007005"/>
    <property type="project" value="TAIR"/>
</dbReference>
<dbReference type="GO" id="GO:0000922">
    <property type="term" value="C:spindle pole"/>
    <property type="evidence" value="ECO:0007669"/>
    <property type="project" value="UniProtKB-SubCell"/>
</dbReference>
<dbReference type="GO" id="GO:0008017">
    <property type="term" value="F:microtubule binding"/>
    <property type="evidence" value="ECO:0007669"/>
    <property type="project" value="InterPro"/>
</dbReference>
<dbReference type="GO" id="GO:0051301">
    <property type="term" value="P:cell division"/>
    <property type="evidence" value="ECO:0007669"/>
    <property type="project" value="UniProtKB-KW"/>
</dbReference>
<dbReference type="GO" id="GO:0001578">
    <property type="term" value="P:microtubule bundle formation"/>
    <property type="evidence" value="ECO:0000316"/>
    <property type="project" value="TAIR"/>
</dbReference>
<dbReference type="GO" id="GO:0009958">
    <property type="term" value="P:positive gravitropism"/>
    <property type="evidence" value="ECO:0000315"/>
    <property type="project" value="TAIR"/>
</dbReference>
<dbReference type="GO" id="GO:0009652">
    <property type="term" value="P:thigmotropism"/>
    <property type="evidence" value="ECO:0000315"/>
    <property type="project" value="TAIR"/>
</dbReference>
<dbReference type="FunFam" id="1.20.5.1430:FF:000004">
    <property type="entry name" value="Microtubule-associated protein RP/EB family member 1B"/>
    <property type="match status" value="1"/>
</dbReference>
<dbReference type="FunFam" id="1.10.418.10:FF:000028">
    <property type="entry name" value="RP/EB family microtubule-associated protein"/>
    <property type="match status" value="1"/>
</dbReference>
<dbReference type="Gene3D" id="1.20.5.1430">
    <property type="match status" value="1"/>
</dbReference>
<dbReference type="Gene3D" id="1.10.418.10">
    <property type="entry name" value="Calponin-like domain"/>
    <property type="match status" value="1"/>
</dbReference>
<dbReference type="InterPro" id="IPR001715">
    <property type="entry name" value="CH_dom"/>
</dbReference>
<dbReference type="InterPro" id="IPR036872">
    <property type="entry name" value="CH_dom_sf"/>
</dbReference>
<dbReference type="InterPro" id="IPR004953">
    <property type="entry name" value="EB1_C"/>
</dbReference>
<dbReference type="InterPro" id="IPR036133">
    <property type="entry name" value="EB1_C_sf"/>
</dbReference>
<dbReference type="InterPro" id="IPR027328">
    <property type="entry name" value="MAPRE"/>
</dbReference>
<dbReference type="PANTHER" id="PTHR10623">
    <property type="entry name" value="MICROTUBULE-ASSOCIATED PROTEIN RP/EB FAMILY MEMBER"/>
    <property type="match status" value="1"/>
</dbReference>
<dbReference type="Pfam" id="PF00307">
    <property type="entry name" value="CH"/>
    <property type="match status" value="1"/>
</dbReference>
<dbReference type="Pfam" id="PF03271">
    <property type="entry name" value="EB1"/>
    <property type="match status" value="1"/>
</dbReference>
<dbReference type="SUPFAM" id="SSF47576">
    <property type="entry name" value="Calponin-homology domain, CH-domain"/>
    <property type="match status" value="1"/>
</dbReference>
<dbReference type="SUPFAM" id="SSF140612">
    <property type="entry name" value="EB1 dimerisation domain-like"/>
    <property type="match status" value="1"/>
</dbReference>
<dbReference type="PROSITE" id="PS50021">
    <property type="entry name" value="CH"/>
    <property type="match status" value="1"/>
</dbReference>
<dbReference type="PROSITE" id="PS51230">
    <property type="entry name" value="EB1_C"/>
    <property type="match status" value="1"/>
</dbReference>
<organism>
    <name type="scientific">Arabidopsis thaliana</name>
    <name type="common">Mouse-ear cress</name>
    <dbReference type="NCBI Taxonomy" id="3702"/>
    <lineage>
        <taxon>Eukaryota</taxon>
        <taxon>Viridiplantae</taxon>
        <taxon>Streptophyta</taxon>
        <taxon>Embryophyta</taxon>
        <taxon>Tracheophyta</taxon>
        <taxon>Spermatophyta</taxon>
        <taxon>Magnoliopsida</taxon>
        <taxon>eudicotyledons</taxon>
        <taxon>Gunneridae</taxon>
        <taxon>Pentapetalae</taxon>
        <taxon>rosids</taxon>
        <taxon>malvids</taxon>
        <taxon>Brassicales</taxon>
        <taxon>Brassicaceae</taxon>
        <taxon>Camelineae</taxon>
        <taxon>Arabidopsis</taxon>
    </lineage>
</organism>